<proteinExistence type="inferred from homology"/>
<sequence length="494" mass="53092">MAKDQKKQPRPKAETPKGFRDYFGADVTERKQMLDRIAQIYHRHGFEPLETSAVETVEALGKFLPDVDRPNAGVFAWQEAEVPGGGAGDWLALRYDLTAPLARVAAQFRGDLPSPYRRYAMGPVWRNEKPGPGRFRQFYQCDADTVGSASVAADAEICAMLAAALEHAGIRRGDYLIRINNRKVLNGILESMGVAEGKPADDVLRTIDKFDKVGEQGVRQLLTTGRKDESGAFIEGVGLSPEQAEPVLAFLTSKGADNAGTLANLRAAVGASATGAEGVEELAQIARMLAAMGVGEERAIVDPSIVRGLGYYTGPVFEAELTFEILDDKGRKRQFGSVAGGGRYDGLVERFTGQKVPATGVSIGVDRLLAALRAKGLMGGTEQGPVVVTVMDRERMADYQAMAAELRAAGIRAEVYLGNPKNFGNQLKYADKRNAPVAIIQGGDEAARGVVQVKDLVLGAKIAAEASHEEWKAQPAQTEVARADLVAEVRRILG</sequence>
<comment type="catalytic activity">
    <reaction evidence="1">
        <text>tRNA(His) + L-histidine + ATP = L-histidyl-tRNA(His) + AMP + diphosphate + H(+)</text>
        <dbReference type="Rhea" id="RHEA:17313"/>
        <dbReference type="Rhea" id="RHEA-COMP:9665"/>
        <dbReference type="Rhea" id="RHEA-COMP:9689"/>
        <dbReference type="ChEBI" id="CHEBI:15378"/>
        <dbReference type="ChEBI" id="CHEBI:30616"/>
        <dbReference type="ChEBI" id="CHEBI:33019"/>
        <dbReference type="ChEBI" id="CHEBI:57595"/>
        <dbReference type="ChEBI" id="CHEBI:78442"/>
        <dbReference type="ChEBI" id="CHEBI:78527"/>
        <dbReference type="ChEBI" id="CHEBI:456215"/>
        <dbReference type="EC" id="6.1.1.21"/>
    </reaction>
</comment>
<comment type="subunit">
    <text evidence="1">Homodimer.</text>
</comment>
<comment type="subcellular location">
    <subcellularLocation>
        <location evidence="1">Cytoplasm</location>
    </subcellularLocation>
</comment>
<comment type="similarity">
    <text evidence="1">Belongs to the class-II aminoacyl-tRNA synthetase family.</text>
</comment>
<accession>A1B3C5</accession>
<name>SYH_PARDP</name>
<gene>
    <name evidence="1" type="primary">hisS</name>
    <name type="ordered locus">Pden_1925</name>
</gene>
<dbReference type="EC" id="6.1.1.21" evidence="1"/>
<dbReference type="EMBL" id="CP000489">
    <property type="protein sequence ID" value="ABL70019.1"/>
    <property type="molecule type" value="Genomic_DNA"/>
</dbReference>
<dbReference type="RefSeq" id="WP_011748216.1">
    <property type="nucleotide sequence ID" value="NC_008686.1"/>
</dbReference>
<dbReference type="SMR" id="A1B3C5"/>
<dbReference type="STRING" id="318586.Pden_1925"/>
<dbReference type="EnsemblBacteria" id="ABL70019">
    <property type="protein sequence ID" value="ABL70019"/>
    <property type="gene ID" value="Pden_1925"/>
</dbReference>
<dbReference type="GeneID" id="93450324"/>
<dbReference type="KEGG" id="pde:Pden_1925"/>
<dbReference type="eggNOG" id="COG0124">
    <property type="taxonomic scope" value="Bacteria"/>
</dbReference>
<dbReference type="HOGENOM" id="CLU_025113_3_2_5"/>
<dbReference type="OrthoDB" id="9800814at2"/>
<dbReference type="Proteomes" id="UP000000361">
    <property type="component" value="Chromosome 1"/>
</dbReference>
<dbReference type="GO" id="GO:0005737">
    <property type="term" value="C:cytoplasm"/>
    <property type="evidence" value="ECO:0007669"/>
    <property type="project" value="UniProtKB-SubCell"/>
</dbReference>
<dbReference type="GO" id="GO:0005524">
    <property type="term" value="F:ATP binding"/>
    <property type="evidence" value="ECO:0007669"/>
    <property type="project" value="UniProtKB-UniRule"/>
</dbReference>
<dbReference type="GO" id="GO:0004821">
    <property type="term" value="F:histidine-tRNA ligase activity"/>
    <property type="evidence" value="ECO:0007669"/>
    <property type="project" value="UniProtKB-UniRule"/>
</dbReference>
<dbReference type="GO" id="GO:0006427">
    <property type="term" value="P:histidyl-tRNA aminoacylation"/>
    <property type="evidence" value="ECO:0007669"/>
    <property type="project" value="UniProtKB-UniRule"/>
</dbReference>
<dbReference type="CDD" id="cd00773">
    <property type="entry name" value="HisRS-like_core"/>
    <property type="match status" value="1"/>
</dbReference>
<dbReference type="CDD" id="cd00859">
    <property type="entry name" value="HisRS_anticodon"/>
    <property type="match status" value="1"/>
</dbReference>
<dbReference type="Gene3D" id="3.40.50.800">
    <property type="entry name" value="Anticodon-binding domain"/>
    <property type="match status" value="1"/>
</dbReference>
<dbReference type="Gene3D" id="3.30.930.10">
    <property type="entry name" value="Bira Bifunctional Protein, Domain 2"/>
    <property type="match status" value="1"/>
</dbReference>
<dbReference type="HAMAP" id="MF_00127">
    <property type="entry name" value="His_tRNA_synth"/>
    <property type="match status" value="1"/>
</dbReference>
<dbReference type="InterPro" id="IPR006195">
    <property type="entry name" value="aa-tRNA-synth_II"/>
</dbReference>
<dbReference type="InterPro" id="IPR045864">
    <property type="entry name" value="aa-tRNA-synth_II/BPL/LPL"/>
</dbReference>
<dbReference type="InterPro" id="IPR004154">
    <property type="entry name" value="Anticodon-bd"/>
</dbReference>
<dbReference type="InterPro" id="IPR036621">
    <property type="entry name" value="Anticodon-bd_dom_sf"/>
</dbReference>
<dbReference type="InterPro" id="IPR015807">
    <property type="entry name" value="His-tRNA-ligase"/>
</dbReference>
<dbReference type="InterPro" id="IPR041715">
    <property type="entry name" value="HisRS-like_core"/>
</dbReference>
<dbReference type="InterPro" id="IPR004516">
    <property type="entry name" value="HisRS/HisZ"/>
</dbReference>
<dbReference type="InterPro" id="IPR033656">
    <property type="entry name" value="HisRS_anticodon"/>
</dbReference>
<dbReference type="NCBIfam" id="TIGR00442">
    <property type="entry name" value="hisS"/>
    <property type="match status" value="1"/>
</dbReference>
<dbReference type="PANTHER" id="PTHR11476:SF7">
    <property type="entry name" value="HISTIDINE--TRNA LIGASE"/>
    <property type="match status" value="1"/>
</dbReference>
<dbReference type="PANTHER" id="PTHR11476">
    <property type="entry name" value="HISTIDYL-TRNA SYNTHETASE"/>
    <property type="match status" value="1"/>
</dbReference>
<dbReference type="Pfam" id="PF03129">
    <property type="entry name" value="HGTP_anticodon"/>
    <property type="match status" value="1"/>
</dbReference>
<dbReference type="Pfam" id="PF13393">
    <property type="entry name" value="tRNA-synt_His"/>
    <property type="match status" value="1"/>
</dbReference>
<dbReference type="PIRSF" id="PIRSF001549">
    <property type="entry name" value="His-tRNA_synth"/>
    <property type="match status" value="1"/>
</dbReference>
<dbReference type="SUPFAM" id="SSF52954">
    <property type="entry name" value="Class II aaRS ABD-related"/>
    <property type="match status" value="1"/>
</dbReference>
<dbReference type="SUPFAM" id="SSF55681">
    <property type="entry name" value="Class II aaRS and biotin synthetases"/>
    <property type="match status" value="1"/>
</dbReference>
<dbReference type="PROSITE" id="PS50862">
    <property type="entry name" value="AA_TRNA_LIGASE_II"/>
    <property type="match status" value="1"/>
</dbReference>
<feature type="chain" id="PRO_1000016407" description="Histidine--tRNA ligase">
    <location>
        <begin position="1"/>
        <end position="494"/>
    </location>
</feature>
<feature type="region of interest" description="Disordered" evidence="2">
    <location>
        <begin position="1"/>
        <end position="20"/>
    </location>
</feature>
<protein>
    <recommendedName>
        <fullName evidence="1">Histidine--tRNA ligase</fullName>
        <ecNumber evidence="1">6.1.1.21</ecNumber>
    </recommendedName>
    <alternativeName>
        <fullName evidence="1">Histidyl-tRNA synthetase</fullName>
        <shortName evidence="1">HisRS</shortName>
    </alternativeName>
</protein>
<organism>
    <name type="scientific">Paracoccus denitrificans (strain Pd 1222)</name>
    <dbReference type="NCBI Taxonomy" id="318586"/>
    <lineage>
        <taxon>Bacteria</taxon>
        <taxon>Pseudomonadati</taxon>
        <taxon>Pseudomonadota</taxon>
        <taxon>Alphaproteobacteria</taxon>
        <taxon>Rhodobacterales</taxon>
        <taxon>Paracoccaceae</taxon>
        <taxon>Paracoccus</taxon>
    </lineage>
</organism>
<reference key="1">
    <citation type="submission" date="2006-12" db="EMBL/GenBank/DDBJ databases">
        <title>Complete sequence of chromosome 1 of Paracoccus denitrificans PD1222.</title>
        <authorList>
            <person name="Copeland A."/>
            <person name="Lucas S."/>
            <person name="Lapidus A."/>
            <person name="Barry K."/>
            <person name="Detter J.C."/>
            <person name="Glavina del Rio T."/>
            <person name="Hammon N."/>
            <person name="Israni S."/>
            <person name="Dalin E."/>
            <person name="Tice H."/>
            <person name="Pitluck S."/>
            <person name="Munk A.C."/>
            <person name="Brettin T."/>
            <person name="Bruce D."/>
            <person name="Han C."/>
            <person name="Tapia R."/>
            <person name="Gilna P."/>
            <person name="Schmutz J."/>
            <person name="Larimer F."/>
            <person name="Land M."/>
            <person name="Hauser L."/>
            <person name="Kyrpides N."/>
            <person name="Lykidis A."/>
            <person name="Spiro S."/>
            <person name="Richardson D.J."/>
            <person name="Moir J.W.B."/>
            <person name="Ferguson S.J."/>
            <person name="van Spanning R.J.M."/>
            <person name="Richardson P."/>
        </authorList>
    </citation>
    <scope>NUCLEOTIDE SEQUENCE [LARGE SCALE GENOMIC DNA]</scope>
    <source>
        <strain>Pd 1222</strain>
    </source>
</reference>
<evidence type="ECO:0000255" key="1">
    <source>
        <dbReference type="HAMAP-Rule" id="MF_00127"/>
    </source>
</evidence>
<evidence type="ECO:0000256" key="2">
    <source>
        <dbReference type="SAM" id="MobiDB-lite"/>
    </source>
</evidence>
<keyword id="KW-0030">Aminoacyl-tRNA synthetase</keyword>
<keyword id="KW-0067">ATP-binding</keyword>
<keyword id="KW-0963">Cytoplasm</keyword>
<keyword id="KW-0436">Ligase</keyword>
<keyword id="KW-0547">Nucleotide-binding</keyword>
<keyword id="KW-0648">Protein biosynthesis</keyword>
<keyword id="KW-1185">Reference proteome</keyword>